<dbReference type="EMBL" id="U19028">
    <property type="protein sequence ID" value="AAB67268.1"/>
    <property type="molecule type" value="Genomic_DNA"/>
</dbReference>
<dbReference type="PIR" id="S69313">
    <property type="entry name" value="S69313"/>
</dbReference>
<dbReference type="DIP" id="DIP-4670N"/>
<dbReference type="STRING" id="4932.YLR339C"/>
<dbReference type="PaxDb" id="4932-YLR339C"/>
<dbReference type="EnsemblFungi" id="YLR339C_mRNA">
    <property type="protein sequence ID" value="YLR339C"/>
    <property type="gene ID" value="YLR339C"/>
</dbReference>
<dbReference type="AGR" id="SGD:S000004331"/>
<dbReference type="SGD" id="S000004331">
    <property type="gene designation" value="YLR339C"/>
</dbReference>
<dbReference type="eggNOG" id="ENOG502S5H0">
    <property type="taxonomic scope" value="Eukaryota"/>
</dbReference>
<dbReference type="HOGENOM" id="CLU_1476256_0_0_1"/>
<dbReference type="OMA" id="GTPKAWK"/>
<dbReference type="GO" id="GO:0016020">
    <property type="term" value="C:membrane"/>
    <property type="evidence" value="ECO:0007669"/>
    <property type="project" value="UniProtKB-SubCell"/>
</dbReference>
<feature type="chain" id="PRO_0000299638" description="Putative uncharacterized protein YLR339C">
    <location>
        <begin position="1"/>
        <end position="183"/>
    </location>
</feature>
<feature type="transmembrane region" description="Helical" evidence="1">
    <location>
        <begin position="153"/>
        <end position="175"/>
    </location>
</feature>
<name>YL339_YEAST</name>
<gene>
    <name type="ordered locus">YLR339C</name>
</gene>
<proteinExistence type="uncertain"/>
<evidence type="ECO:0000255" key="1"/>
<evidence type="ECO:0000305" key="2"/>
<evidence type="ECO:0000305" key="3">
    <source>
    </source>
</evidence>
<accession>O94085</accession>
<organism>
    <name type="scientific">Saccharomyces cerevisiae (strain ATCC 204508 / S288c)</name>
    <name type="common">Baker's yeast</name>
    <dbReference type="NCBI Taxonomy" id="559292"/>
    <lineage>
        <taxon>Eukaryota</taxon>
        <taxon>Fungi</taxon>
        <taxon>Dikarya</taxon>
        <taxon>Ascomycota</taxon>
        <taxon>Saccharomycotina</taxon>
        <taxon>Saccharomycetes</taxon>
        <taxon>Saccharomycetales</taxon>
        <taxon>Saccharomycetaceae</taxon>
        <taxon>Saccharomyces</taxon>
    </lineage>
</organism>
<sequence>MVPLAILVGTPKAWKKEVLPGSIPVLTALTQMSSGATAPALAGAATLLETITFLISVNGSLVKTKPTLPLTKGNNFSKSGKSDKKPLMALLTMVFLPIKTTALPLNSFLTSCICWEETLSTPTTNKDLYSSKYSLNLAKYSAFFSRMPPISNLLYVFIRLFAGCLKVFRLCILWLKLEKRIEN</sequence>
<protein>
    <recommendedName>
        <fullName>Putative uncharacterized protein YLR339C</fullName>
    </recommendedName>
</protein>
<keyword id="KW-0472">Membrane</keyword>
<keyword id="KW-0812">Transmembrane</keyword>
<keyword id="KW-1133">Transmembrane helix</keyword>
<comment type="subcellular location">
    <subcellularLocation>
        <location evidence="2">Membrane</location>
        <topology evidence="2">Single-pass membrane protein</topology>
    </subcellularLocation>
</comment>
<comment type="miscellaneous">
    <text evidence="2">Partially overlaps RPP0.</text>
</comment>
<comment type="caution">
    <text evidence="3">Product of a dubious gene prediction unlikely to encode a functional protein. Because of that it is not part of the S.cerevisiae S288c complete/reference proteome set.</text>
</comment>
<reference key="1">
    <citation type="journal article" date="1997" name="Nature">
        <title>The nucleotide sequence of Saccharomyces cerevisiae chromosome XII.</title>
        <authorList>
            <person name="Johnston M."/>
            <person name="Hillier L.W."/>
            <person name="Riles L."/>
            <person name="Albermann K."/>
            <person name="Andre B."/>
            <person name="Ansorge W."/>
            <person name="Benes V."/>
            <person name="Brueckner M."/>
            <person name="Delius H."/>
            <person name="Dubois E."/>
            <person name="Duesterhoeft A."/>
            <person name="Entian K.-D."/>
            <person name="Floeth M."/>
            <person name="Goffeau A."/>
            <person name="Hebling U."/>
            <person name="Heumann K."/>
            <person name="Heuss-Neitzel D."/>
            <person name="Hilbert H."/>
            <person name="Hilger F."/>
            <person name="Kleine K."/>
            <person name="Koetter P."/>
            <person name="Louis E.J."/>
            <person name="Messenguy F."/>
            <person name="Mewes H.-W."/>
            <person name="Miosga T."/>
            <person name="Moestl D."/>
            <person name="Mueller-Auer S."/>
            <person name="Nentwich U."/>
            <person name="Obermaier B."/>
            <person name="Piravandi E."/>
            <person name="Pohl T.M."/>
            <person name="Portetelle D."/>
            <person name="Purnelle B."/>
            <person name="Rechmann S."/>
            <person name="Rieger M."/>
            <person name="Rinke M."/>
            <person name="Rose M."/>
            <person name="Scharfe M."/>
            <person name="Scherens B."/>
            <person name="Scholler P."/>
            <person name="Schwager C."/>
            <person name="Schwarz S."/>
            <person name="Underwood A.P."/>
            <person name="Urrestarazu L.A."/>
            <person name="Vandenbol M."/>
            <person name="Verhasselt P."/>
            <person name="Vierendeels F."/>
            <person name="Voet M."/>
            <person name="Volckaert G."/>
            <person name="Voss H."/>
            <person name="Wambutt R."/>
            <person name="Wedler E."/>
            <person name="Wedler H."/>
            <person name="Zimmermann F.K."/>
            <person name="Zollner A."/>
            <person name="Hani J."/>
            <person name="Hoheisel J.D."/>
        </authorList>
    </citation>
    <scope>NUCLEOTIDE SEQUENCE [LARGE SCALE GENOMIC DNA]</scope>
    <source>
        <strain>ATCC 204508 / S288c</strain>
    </source>
</reference>
<reference key="2">
    <citation type="journal article" date="2014" name="G3 (Bethesda)">
        <title>The reference genome sequence of Saccharomyces cerevisiae: Then and now.</title>
        <authorList>
            <person name="Engel S.R."/>
            <person name="Dietrich F.S."/>
            <person name="Fisk D.G."/>
            <person name="Binkley G."/>
            <person name="Balakrishnan R."/>
            <person name="Costanzo M.C."/>
            <person name="Dwight S.S."/>
            <person name="Hitz B.C."/>
            <person name="Karra K."/>
            <person name="Nash R.S."/>
            <person name="Weng S."/>
            <person name="Wong E.D."/>
            <person name="Lloyd P."/>
            <person name="Skrzypek M.S."/>
            <person name="Miyasato S.R."/>
            <person name="Simison M."/>
            <person name="Cherry J.M."/>
        </authorList>
    </citation>
    <scope>GENOME REANNOTATION</scope>
    <source>
        <strain>ATCC 204508 / S288c</strain>
    </source>
</reference>